<name>HDAC7_RAT</name>
<dbReference type="EC" id="3.5.1.98" evidence="2"/>
<dbReference type="EC" id="3.5.1.-" evidence="2"/>
<dbReference type="EMBL" id="AF321135">
    <property type="protein sequence ID" value="AAK11188.1"/>
    <property type="molecule type" value="mRNA"/>
</dbReference>
<dbReference type="SMR" id="Q99P96"/>
<dbReference type="STRING" id="10116.ENSRNOP00000073744"/>
<dbReference type="BindingDB" id="Q99P96"/>
<dbReference type="ChEMBL" id="CHEMBL2095943"/>
<dbReference type="DrugCentral" id="Q99P96"/>
<dbReference type="GlyGen" id="Q99P96">
    <property type="glycosylation" value="1 site"/>
</dbReference>
<dbReference type="iPTMnet" id="Q99P96"/>
<dbReference type="PaxDb" id="10116-ENSRNOP00000011322"/>
<dbReference type="UCSC" id="RGD:619982">
    <property type="organism name" value="rat"/>
</dbReference>
<dbReference type="AGR" id="RGD:619982"/>
<dbReference type="RGD" id="619982">
    <property type="gene designation" value="Hdac7"/>
</dbReference>
<dbReference type="eggNOG" id="KOG1343">
    <property type="taxonomic scope" value="Eukaryota"/>
</dbReference>
<dbReference type="InParanoid" id="Q99P96"/>
<dbReference type="Proteomes" id="UP000002494">
    <property type="component" value="Unplaced"/>
</dbReference>
<dbReference type="GO" id="GO:0005737">
    <property type="term" value="C:cytoplasm"/>
    <property type="evidence" value="ECO:0000250"/>
    <property type="project" value="UniProtKB"/>
</dbReference>
<dbReference type="GO" id="GO:0000118">
    <property type="term" value="C:histone deacetylase complex"/>
    <property type="evidence" value="ECO:0000304"/>
    <property type="project" value="UniProtKB"/>
</dbReference>
<dbReference type="GO" id="GO:0005634">
    <property type="term" value="C:nucleus"/>
    <property type="evidence" value="ECO:0000250"/>
    <property type="project" value="UniProtKB"/>
</dbReference>
<dbReference type="GO" id="GO:0071889">
    <property type="term" value="F:14-3-3 protein binding"/>
    <property type="evidence" value="ECO:0000250"/>
    <property type="project" value="UniProtKB"/>
</dbReference>
<dbReference type="GO" id="GO:0003682">
    <property type="term" value="F:chromatin binding"/>
    <property type="evidence" value="ECO:0000266"/>
    <property type="project" value="RGD"/>
</dbReference>
<dbReference type="GO" id="GO:0140297">
    <property type="term" value="F:DNA-binding transcription factor binding"/>
    <property type="evidence" value="ECO:0000266"/>
    <property type="project" value="RGD"/>
</dbReference>
<dbReference type="GO" id="GO:0004407">
    <property type="term" value="F:histone deacetylase activity"/>
    <property type="evidence" value="ECO:0000250"/>
    <property type="project" value="UniProtKB"/>
</dbReference>
<dbReference type="GO" id="GO:0141221">
    <property type="term" value="F:histone deacetylase activity, hydrolytic mechanism"/>
    <property type="evidence" value="ECO:0007669"/>
    <property type="project" value="UniProtKB-EC"/>
</dbReference>
<dbReference type="GO" id="GO:0019901">
    <property type="term" value="F:protein kinase binding"/>
    <property type="evidence" value="ECO:0000266"/>
    <property type="project" value="RGD"/>
</dbReference>
<dbReference type="GO" id="GO:0005080">
    <property type="term" value="F:protein kinase C binding"/>
    <property type="evidence" value="ECO:0000266"/>
    <property type="project" value="RGD"/>
</dbReference>
<dbReference type="GO" id="GO:0033558">
    <property type="term" value="F:protein lysine deacetylase activity"/>
    <property type="evidence" value="ECO:0000250"/>
    <property type="project" value="UniProtKB"/>
</dbReference>
<dbReference type="GO" id="GO:0003714">
    <property type="term" value="F:transcription corepressor activity"/>
    <property type="evidence" value="ECO:0000266"/>
    <property type="project" value="RGD"/>
</dbReference>
<dbReference type="GO" id="GO:0042113">
    <property type="term" value="P:B cell activation"/>
    <property type="evidence" value="ECO:0000304"/>
    <property type="project" value="UniProtKB"/>
</dbReference>
<dbReference type="GO" id="GO:0030183">
    <property type="term" value="P:B cell differentiation"/>
    <property type="evidence" value="ECO:0000304"/>
    <property type="project" value="UniProtKB"/>
</dbReference>
<dbReference type="GO" id="GO:0007043">
    <property type="term" value="P:cell-cell junction assembly"/>
    <property type="evidence" value="ECO:0000266"/>
    <property type="project" value="RGD"/>
</dbReference>
<dbReference type="GO" id="GO:0071260">
    <property type="term" value="P:cellular response to mechanical stimulus"/>
    <property type="evidence" value="ECO:0000270"/>
    <property type="project" value="RGD"/>
</dbReference>
<dbReference type="GO" id="GO:0006325">
    <property type="term" value="P:chromatin organization"/>
    <property type="evidence" value="ECO:0000304"/>
    <property type="project" value="UniProtKB"/>
</dbReference>
<dbReference type="GO" id="GO:0006954">
    <property type="term" value="P:inflammatory response"/>
    <property type="evidence" value="ECO:0000304"/>
    <property type="project" value="UniProtKB"/>
</dbReference>
<dbReference type="GO" id="GO:0045892">
    <property type="term" value="P:negative regulation of DNA-templated transcription"/>
    <property type="evidence" value="ECO:0000266"/>
    <property type="project" value="RGD"/>
</dbReference>
<dbReference type="GO" id="GO:0032703">
    <property type="term" value="P:negative regulation of interleukin-2 production"/>
    <property type="evidence" value="ECO:0000266"/>
    <property type="project" value="RGD"/>
</dbReference>
<dbReference type="GO" id="GO:1901223">
    <property type="term" value="P:negative regulation of non-canonical NF-kappaB signal transduction"/>
    <property type="evidence" value="ECO:0000266"/>
    <property type="project" value="RGD"/>
</dbReference>
<dbReference type="GO" id="GO:0045668">
    <property type="term" value="P:negative regulation of osteoblast differentiation"/>
    <property type="evidence" value="ECO:0000266"/>
    <property type="project" value="RGD"/>
</dbReference>
<dbReference type="GO" id="GO:0045843">
    <property type="term" value="P:negative regulation of striated muscle tissue development"/>
    <property type="evidence" value="ECO:0000304"/>
    <property type="project" value="UniProtKB"/>
</dbReference>
<dbReference type="GO" id="GO:0000122">
    <property type="term" value="P:negative regulation of transcription by RNA polymerase II"/>
    <property type="evidence" value="ECO:0000266"/>
    <property type="project" value="RGD"/>
</dbReference>
<dbReference type="GO" id="GO:0007399">
    <property type="term" value="P:nervous system development"/>
    <property type="evidence" value="ECO:0000304"/>
    <property type="project" value="UniProtKB"/>
</dbReference>
<dbReference type="GO" id="GO:0051402">
    <property type="term" value="P:neuron apoptotic process"/>
    <property type="evidence" value="ECO:0000270"/>
    <property type="project" value="RGD"/>
</dbReference>
<dbReference type="GO" id="GO:0030182">
    <property type="term" value="P:neuron differentiation"/>
    <property type="evidence" value="ECO:0000270"/>
    <property type="project" value="RGD"/>
</dbReference>
<dbReference type="GO" id="GO:0090050">
    <property type="term" value="P:positive regulation of cell migration involved in sprouting angiogenesis"/>
    <property type="evidence" value="ECO:0000266"/>
    <property type="project" value="RGD"/>
</dbReference>
<dbReference type="GO" id="GO:0050684">
    <property type="term" value="P:regulation of mRNA processing"/>
    <property type="evidence" value="ECO:0000266"/>
    <property type="project" value="RGD"/>
</dbReference>
<dbReference type="GO" id="GO:0001570">
    <property type="term" value="P:vasculogenesis"/>
    <property type="evidence" value="ECO:0000266"/>
    <property type="project" value="RGD"/>
</dbReference>
<dbReference type="PANTHER" id="PTHR45364:SF13">
    <property type="entry name" value="HISTONE DEACETYLASE"/>
    <property type="match status" value="1"/>
</dbReference>
<dbReference type="PANTHER" id="PTHR45364">
    <property type="entry name" value="HISTONE DEACETYLASE 9-RELATED"/>
    <property type="match status" value="1"/>
</dbReference>
<proteinExistence type="evidence at protein level"/>
<sequence>TPGSQPQPMDLRVGQRPTVEPPPEPALLTLQHPQRLHRHLFLAGLQQQQRSAEPMRLSMDPPLPELQGGQQEQELRQLLNKDKSKRSAVASSVVKQKLAEVILKKQQAALERTVHPSSPSIPYRTLEPLDTEGAARSVLSSFLPPVPSLPTEPPEHFPLRKTVSEPNLKLRYKPKKSLERRKNPLLRKESAPPSLRRRPAETLGDSSPSSSSTPASGCSSPNDSEHGPNPALGSEADG</sequence>
<feature type="chain" id="PRO_0000114707" description="Histone deacetylase 7">
    <location>
        <begin position="1" status="less than"/>
        <end position="238" status="greater than"/>
    </location>
</feature>
<feature type="region of interest" description="Disordered" evidence="3">
    <location>
        <begin position="1"/>
        <end position="26"/>
    </location>
</feature>
<feature type="region of interest" description="Disordered" evidence="3">
    <location>
        <begin position="47"/>
        <end position="72"/>
    </location>
</feature>
<feature type="region of interest" description="Interaction with MEF2A" evidence="1">
    <location>
        <begin position="58"/>
        <end position="158"/>
    </location>
</feature>
<feature type="region of interest" description="Disordered" evidence="3">
    <location>
        <begin position="145"/>
        <end position="238"/>
    </location>
</feature>
<feature type="compositionally biased region" description="Basic and acidic residues" evidence="3">
    <location>
        <begin position="176"/>
        <end position="190"/>
    </location>
</feature>
<feature type="compositionally biased region" description="Low complexity" evidence="3">
    <location>
        <begin position="206"/>
        <end position="221"/>
    </location>
</feature>
<feature type="modified residue" description="Phosphoserine" evidence="2">
    <location>
        <position position="118"/>
    </location>
</feature>
<feature type="modified residue" description="Phosphoserine" evidence="5">
    <location>
        <position position="164"/>
    </location>
</feature>
<feature type="modified residue" description="Phosphoserine; by PKD/PRKD2" evidence="2">
    <location>
        <position position="190"/>
    </location>
</feature>
<feature type="non-terminal residue">
    <location>
        <position position="1"/>
    </location>
</feature>
<feature type="non-terminal residue">
    <location>
        <position position="238"/>
    </location>
</feature>
<gene>
    <name type="primary">Hdac7</name>
    <name type="synonym">Hdac7a</name>
</gene>
<protein>
    <recommendedName>
        <fullName>Histone deacetylase 7</fullName>
        <shortName>HD7</shortName>
        <ecNumber evidence="2">3.5.1.98</ecNumber>
    </recommendedName>
    <alternativeName>
        <fullName>Histone deacetylase 7A</fullName>
        <shortName>HD7a</shortName>
    </alternativeName>
    <alternativeName>
        <fullName evidence="4">Protein deacetylase HDAC7</fullName>
        <ecNumber evidence="2">3.5.1.-</ecNumber>
    </alternativeName>
</protein>
<comment type="function">
    <text evidence="1 2">Responsible for the deacetylation of lysine residues on the N-terminal part of the core histones (H2A, H2B, H3 and H4). Histone deacetylation gives a tag for epigenetic repression and plays an important role in transcriptional regulation, cell cycle progression and developmental events. Histone deacetylases act via the formation of large multiprotein complexes. Involved in muscle maturation by repressing transcription of myocyte enhancer factors such as MEF2A, MEF2B and MEF2C. During muscle differentiation, it shuttles into the cytoplasm, allowing the expression of myocyte enhancer factors (By similarity). May be involved in Epstein-Barr virus (EBV) latency, possibly by repressing the viral BZLF1 gene. Positively regulates the transcriptional repressor activity of FOXP3. Serves as a corepressor of RARA, causing its deacetylation and inhibition of RARE DNA element binding. In association with RARA, plays a role in the repression of microRNA-10a and thereby in the inflammatory response. Also acetylates non-histone proteins, such as ALKBH5 (By similarity).</text>
</comment>
<comment type="catalytic activity">
    <reaction evidence="1">
        <text>N(6)-acetyl-L-lysyl-[histone] + H2O = L-lysyl-[histone] + acetate</text>
        <dbReference type="Rhea" id="RHEA:58196"/>
        <dbReference type="Rhea" id="RHEA-COMP:9845"/>
        <dbReference type="Rhea" id="RHEA-COMP:11338"/>
        <dbReference type="ChEBI" id="CHEBI:15377"/>
        <dbReference type="ChEBI" id="CHEBI:29969"/>
        <dbReference type="ChEBI" id="CHEBI:30089"/>
        <dbReference type="ChEBI" id="CHEBI:61930"/>
        <dbReference type="EC" id="3.5.1.98"/>
    </reaction>
</comment>
<comment type="catalytic activity">
    <reaction evidence="2">
        <text>N(6)-acetyl-L-lysyl-[protein] + H2O = L-lysyl-[protein] + acetate</text>
        <dbReference type="Rhea" id="RHEA:58108"/>
        <dbReference type="Rhea" id="RHEA-COMP:9752"/>
        <dbReference type="Rhea" id="RHEA-COMP:10731"/>
        <dbReference type="ChEBI" id="CHEBI:15377"/>
        <dbReference type="ChEBI" id="CHEBI:29969"/>
        <dbReference type="ChEBI" id="CHEBI:30089"/>
        <dbReference type="ChEBI" id="CHEBI:61930"/>
    </reaction>
    <physiologicalReaction direction="left-to-right" evidence="2">
        <dbReference type="Rhea" id="RHEA:58109"/>
    </physiologicalReaction>
</comment>
<comment type="subunit">
    <text evidence="1 2">Interacts with HDAC1, HDAC2, HDAC3, HDAC4, HDAC5, NCOR1, NCOR2, SIN3A, SIN3B, RBBP4, RBBP7, MTA1L1, SAP30 and MBD3 (By similarity). Interacts with KAT5 and EDNRA (By similarity). Interacts with the 14-3-3 protein YWHAE, MEF2A, MEF2B and MEF2C. Interacts with ZMYND15 (By similarity). Interacts with KDM5B. Interacts with PML (By similarity). Interacts with FOXP3 (By similarity). Interacts with RARA (By similarity).</text>
</comment>
<comment type="subcellular location">
    <subcellularLocation>
        <location evidence="1">Nucleus</location>
    </subcellularLocation>
    <subcellularLocation>
        <location evidence="1">Cytoplasm</location>
    </subcellularLocation>
    <text evidence="1">In the nucleus, it associates with distinct subnuclear dot-like structures. Shuttles between the nucleus and the cytoplasm. In muscle cells, it shuttles into the cytoplasm during myocyte differentiation. The export to cytoplasm depends on the interaction with the 14-3-3 protein YWHAE and is due to its phosphorylation.</text>
</comment>
<comment type="PTM">
    <text evidence="2">May be phosphorylated by CaMK1. Phosphorylated by the PKC kinases PKN1 and PKN2, impairing nuclear import. Phosphorylation at Ser-164 by MARK2, MARK3 and PRKD1 promotes interaction with 14-3-3 proteins and export from the nucleus. Phosphorylation at Ser-164 is a prerequisite for phosphorylation at Ser-190 (By similarity).</text>
</comment>
<comment type="similarity">
    <text evidence="4">Belongs to the histone deacetylase family. HD type 2 subfamily.</text>
</comment>
<keyword id="KW-0156">Chromatin regulator</keyword>
<keyword id="KW-0963">Cytoplasm</keyword>
<keyword id="KW-0378">Hydrolase</keyword>
<keyword id="KW-0539">Nucleus</keyword>
<keyword id="KW-0597">Phosphoprotein</keyword>
<keyword id="KW-1185">Reference proteome</keyword>
<keyword id="KW-0677">Repeat</keyword>
<keyword id="KW-0678">Repressor</keyword>
<keyword id="KW-0804">Transcription</keyword>
<keyword id="KW-0805">Transcription regulation</keyword>
<accession>Q99P96</accession>
<reference key="1">
    <citation type="submission" date="2000-11" db="EMBL/GenBank/DDBJ databases">
        <title>Expression pattern of rat histone deacetylases.</title>
        <authorList>
            <person name="Wilquet V."/>
            <person name="Chavez M."/>
            <person name="Korbers R."/>
            <person name="Geerts A."/>
        </authorList>
    </citation>
    <scope>NUCLEOTIDE SEQUENCE [MRNA]</scope>
    <source>
        <strain>Wistar</strain>
        <tissue>Testis</tissue>
    </source>
</reference>
<reference key="2">
    <citation type="journal article" date="2012" name="Nat. Commun.">
        <title>Quantitative maps of protein phosphorylation sites across 14 different rat organs and tissues.</title>
        <authorList>
            <person name="Lundby A."/>
            <person name="Secher A."/>
            <person name="Lage K."/>
            <person name="Nordsborg N.B."/>
            <person name="Dmytriyev A."/>
            <person name="Lundby C."/>
            <person name="Olsen J.V."/>
        </authorList>
    </citation>
    <scope>PHOSPHORYLATION [LARGE SCALE ANALYSIS] AT SER-164</scope>
    <scope>IDENTIFICATION BY MASS SPECTROMETRY [LARGE SCALE ANALYSIS]</scope>
</reference>
<organism>
    <name type="scientific">Rattus norvegicus</name>
    <name type="common">Rat</name>
    <dbReference type="NCBI Taxonomy" id="10116"/>
    <lineage>
        <taxon>Eukaryota</taxon>
        <taxon>Metazoa</taxon>
        <taxon>Chordata</taxon>
        <taxon>Craniata</taxon>
        <taxon>Vertebrata</taxon>
        <taxon>Euteleostomi</taxon>
        <taxon>Mammalia</taxon>
        <taxon>Eutheria</taxon>
        <taxon>Euarchontoglires</taxon>
        <taxon>Glires</taxon>
        <taxon>Rodentia</taxon>
        <taxon>Myomorpha</taxon>
        <taxon>Muroidea</taxon>
        <taxon>Muridae</taxon>
        <taxon>Murinae</taxon>
        <taxon>Rattus</taxon>
    </lineage>
</organism>
<evidence type="ECO:0000250" key="1">
    <source>
        <dbReference type="UniProtKB" id="Q8C2B3"/>
    </source>
</evidence>
<evidence type="ECO:0000250" key="2">
    <source>
        <dbReference type="UniProtKB" id="Q8WUI4"/>
    </source>
</evidence>
<evidence type="ECO:0000256" key="3">
    <source>
        <dbReference type="SAM" id="MobiDB-lite"/>
    </source>
</evidence>
<evidence type="ECO:0000305" key="4"/>
<evidence type="ECO:0007744" key="5">
    <source>
    </source>
</evidence>